<accession>Q5UPX3</accession>
<organismHost>
    <name type="scientific">Acanthamoeba polyphaga</name>
    <name type="common">Amoeba</name>
    <dbReference type="NCBI Taxonomy" id="5757"/>
</organismHost>
<feature type="chain" id="PRO_0000059418" description="Collagen-like protein 3">
    <location>
        <begin position="1"/>
        <end position="939"/>
    </location>
</feature>
<feature type="domain" description="Collagen-like 1">
    <location>
        <begin position="88"/>
        <end position="147"/>
    </location>
</feature>
<feature type="domain" description="Collagen-like 2">
    <location>
        <begin position="148"/>
        <end position="207"/>
    </location>
</feature>
<feature type="domain" description="Collagen-like 3">
    <location>
        <begin position="211"/>
        <end position="330"/>
    </location>
</feature>
<feature type="domain" description="Collagen-like 4">
    <location>
        <begin position="364"/>
        <end position="423"/>
    </location>
</feature>
<feature type="domain" description="Collagen-like 5">
    <location>
        <begin position="427"/>
        <end position="486"/>
    </location>
</feature>
<feature type="domain" description="Collagen-like 6">
    <location>
        <begin position="493"/>
        <end position="552"/>
    </location>
</feature>
<feature type="domain" description="Collagen-like 7">
    <location>
        <begin position="564"/>
        <end position="622"/>
    </location>
</feature>
<feature type="domain" description="Collagen-like 8">
    <location>
        <begin position="638"/>
        <end position="697"/>
    </location>
</feature>
<feature type="region of interest" description="Disordered" evidence="2">
    <location>
        <begin position="84"/>
        <end position="332"/>
    </location>
</feature>
<feature type="region of interest" description="Disordered" evidence="2">
    <location>
        <begin position="358"/>
        <end position="697"/>
    </location>
</feature>
<feature type="region of interest" description="Disordered" evidence="2">
    <location>
        <begin position="896"/>
        <end position="923"/>
    </location>
</feature>
<feature type="compositionally biased region" description="Low complexity" evidence="2">
    <location>
        <begin position="84"/>
        <end position="95"/>
    </location>
</feature>
<feature type="compositionally biased region" description="Basic and acidic residues" evidence="2">
    <location>
        <begin position="96"/>
        <end position="110"/>
    </location>
</feature>
<feature type="compositionally biased region" description="Basic and acidic residues" evidence="2">
    <location>
        <begin position="123"/>
        <end position="182"/>
    </location>
</feature>
<feature type="compositionally biased region" description="Basic and acidic residues" evidence="2">
    <location>
        <begin position="189"/>
        <end position="230"/>
    </location>
</feature>
<feature type="compositionally biased region" description="Basic and acidic residues" evidence="2">
    <location>
        <begin position="237"/>
        <end position="260"/>
    </location>
</feature>
<feature type="compositionally biased region" description="Basic and acidic residues" evidence="2">
    <location>
        <begin position="267"/>
        <end position="288"/>
    </location>
</feature>
<feature type="compositionally biased region" description="Basic and acidic residues" evidence="2">
    <location>
        <begin position="297"/>
        <end position="314"/>
    </location>
</feature>
<feature type="compositionally biased region" description="Basic and acidic residues" evidence="2">
    <location>
        <begin position="360"/>
        <end position="371"/>
    </location>
</feature>
<feature type="compositionally biased region" description="Basic and acidic residues" evidence="2">
    <location>
        <begin position="378"/>
        <end position="416"/>
    </location>
</feature>
<feature type="compositionally biased region" description="Basic and acidic residues" evidence="2">
    <location>
        <begin position="423"/>
        <end position="491"/>
    </location>
</feature>
<feature type="compositionally biased region" description="Basic and acidic residues" evidence="2">
    <location>
        <begin position="498"/>
        <end position="527"/>
    </location>
</feature>
<feature type="compositionally biased region" description="Basic and acidic residues" evidence="2">
    <location>
        <begin position="537"/>
        <end position="552"/>
    </location>
</feature>
<feature type="compositionally biased region" description="Basic and acidic residues" evidence="2">
    <location>
        <begin position="560"/>
        <end position="580"/>
    </location>
</feature>
<feature type="compositionally biased region" description="Basic and acidic residues" evidence="2">
    <location>
        <begin position="589"/>
        <end position="684"/>
    </location>
</feature>
<feature type="compositionally biased region" description="Gly residues" evidence="2">
    <location>
        <begin position="910"/>
        <end position="923"/>
    </location>
</feature>
<feature type="glycosylation site" description="N-linked (GlcNAc...) asparagine; by host" evidence="1">
    <location>
        <position position="15"/>
    </location>
</feature>
<feature type="glycosylation site" description="N-linked (GlcNAc...) asparagine; by host" evidence="1">
    <location>
        <position position="35"/>
    </location>
</feature>
<feature type="glycosylation site" description="N-linked (GlcNAc...) asparagine; by host" evidence="1">
    <location>
        <position position="39"/>
    </location>
</feature>
<feature type="glycosylation site" description="N-linked (GlcNAc...) asparagine; by host" evidence="1">
    <location>
        <position position="82"/>
    </location>
</feature>
<feature type="glycosylation site" description="N-linked (GlcNAc...) asparagine; by host" evidence="1">
    <location>
        <position position="788"/>
    </location>
</feature>
<feature type="glycosylation site" description="N-linked (GlcNAc...) asparagine; by host" evidence="1">
    <location>
        <position position="820"/>
    </location>
</feature>
<feature type="glycosylation site" description="N-linked (GlcNAc...) asparagine; by host" evidence="1">
    <location>
        <position position="858"/>
    </location>
</feature>
<feature type="glycosylation site" description="N-linked (GlcNAc...) asparagine; by host" evidence="1">
    <location>
        <position position="919"/>
    </location>
</feature>
<feature type="glycosylation site" description="N-linked (GlcNAc...) asparagine; by host" evidence="1">
    <location>
        <position position="925"/>
    </location>
</feature>
<dbReference type="EMBL" id="AY653733">
    <property type="protein sequence ID" value="AAV50512.1"/>
    <property type="molecule type" value="Genomic_DNA"/>
</dbReference>
<dbReference type="KEGG" id="vg:9924846"/>
<dbReference type="OrthoDB" id="40453at10239"/>
<dbReference type="Proteomes" id="UP000001134">
    <property type="component" value="Genome"/>
</dbReference>
<dbReference type="GO" id="GO:0044423">
    <property type="term" value="C:virion component"/>
    <property type="evidence" value="ECO:0007669"/>
    <property type="project" value="UniProtKB-KW"/>
</dbReference>
<dbReference type="InterPro" id="IPR008160">
    <property type="entry name" value="Collagen"/>
</dbReference>
<dbReference type="InterPro" id="IPR050938">
    <property type="entry name" value="Collagen_Structural_Proteins"/>
</dbReference>
<dbReference type="PANTHER" id="PTHR37456:SF3">
    <property type="entry name" value="COLLAGEN ALPHA-1(XXV) CHAIN"/>
    <property type="match status" value="1"/>
</dbReference>
<dbReference type="PANTHER" id="PTHR37456">
    <property type="entry name" value="SI:CH211-266K2.1"/>
    <property type="match status" value="1"/>
</dbReference>
<dbReference type="Pfam" id="PF01391">
    <property type="entry name" value="Collagen"/>
    <property type="match status" value="6"/>
</dbReference>
<reference key="1">
    <citation type="journal article" date="2004" name="Science">
        <title>The 1.2-megabase genome sequence of Mimivirus.</title>
        <authorList>
            <person name="Raoult D."/>
            <person name="Audic S."/>
            <person name="Robert C."/>
            <person name="Abergel C."/>
            <person name="Renesto P."/>
            <person name="Ogata H."/>
            <person name="La Scola B."/>
            <person name="Susan M."/>
            <person name="Claverie J.-M."/>
        </authorList>
    </citation>
    <scope>NUCLEOTIDE SEQUENCE [LARGE SCALE GENOMIC DNA]</scope>
    <source>
        <strain>Rowbotham-Bradford</strain>
    </source>
</reference>
<organism>
    <name type="scientific">Acanthamoeba polyphaga mimivirus</name>
    <name type="common">APMV</name>
    <dbReference type="NCBI Taxonomy" id="212035"/>
    <lineage>
        <taxon>Viruses</taxon>
        <taxon>Varidnaviria</taxon>
        <taxon>Bamfordvirae</taxon>
        <taxon>Nucleocytoviricota</taxon>
        <taxon>Megaviricetes</taxon>
        <taxon>Imitervirales</taxon>
        <taxon>Mimiviridae</taxon>
        <taxon>Megamimivirinae</taxon>
        <taxon>Mimivirus</taxon>
        <taxon>Mimivirus bradfordmassiliense</taxon>
    </lineage>
</organism>
<comment type="function">
    <text evidence="3">May participate in the formation of a layer of cross-linked glycosylated fibrils at the viral surface thus giving it a hairy-like appearance.</text>
</comment>
<comment type="subcellular location">
    <subcellularLocation>
        <location>Virion</location>
    </subcellularLocation>
</comment>
<comment type="PTM">
    <text evidence="3">May be hydroxylated on lysine by the viral-encoded procollagen-lysine,2-oxoglutarate 5-dioxygenase.</text>
</comment>
<evidence type="ECO:0000255" key="1"/>
<evidence type="ECO:0000256" key="2">
    <source>
        <dbReference type="SAM" id="MobiDB-lite"/>
    </source>
</evidence>
<evidence type="ECO:0000305" key="3"/>
<sequence length="939" mass="90971">MFGNCQKQNCCTQRNNTGICYSVCPPQTVITVPGNVTCNASRIYVNIGRPNNCFGNDGDLYLDTNTNNLYYKRDGVWLLVGNLSGSSGPSGPQGPKGEKGSNGDKGDKGEIGIQGLKGESGADADKGDKGDKGDKGSKGTKGENGDKGNKGDKGDPGIKGSKGEKGSKGDKGSKGDKGDPGIKGESGADADKGDKGDKGSKGDKGDKGIDGNKGEKGSKGDKGDKGDIGLKGESGADADKGDKGDKGSKGDKGDKGDIGPKGESGADADKGDKGDKGSKGDKGDKGTKGESGLIGTKGDKGDKGDKGIKGDKGEAGTSILEGSGVPSPDLGNNGDLYIDGMTGLLYAKINDEWVPVTSIKGDKGDKGDTGLKGESGADADKGEKGDPGNKGDKGNKGDKGSKGDKGDKGDKGDTGLKGESGADADKGDKGGKGEKGDNGEKGSKGEKGEKGEKGDNGEKGDKGDNGEKGEKGEKGEKGDNGEKGEKGDVGIKGESGADADKGDKGEKGDKGVNGDKGDKGSKGDTGIKGEAGTAANKGDKGSKGDKGDKGSKGDIGISIKGDKGDKGDKGSKGDKGDIGIKGESGLSIKGDKGDKGGKGDKGDLGSKGDIGLKGDKGDKGDVGLKGDKGDKGDVGSKGDKGDKGSKGDKGSKGDTGSKGDKGDKGSKGDKGDKGDKGSKGDKGDIGSIGPKGEKGEAGSTNSLYIGSAQLGNAGDFNNEIIPVTGIAYITAVGAGGSGYSGTTGGYGGGGAGGAFINYPVYVSSSQTYSAHVGFGGAQVAGNSNKGENTTITIGNLVLLAGGGEGGTATTGGTGGLVSINGTQITAGAPGGTSGNSGVSSIYINPLVIGGAGGGGGSNGTNAGNGGNYAGFTGGIASPGVNGGGGGGASLFSNGFNGETGAPTTDSGTNYGAGGGGGGNGTQGGNGSLGYVRIDFYSAP</sequence>
<keyword id="KW-0176">Collagen</keyword>
<keyword id="KW-0325">Glycoprotein</keyword>
<keyword id="KW-0379">Hydroxylation</keyword>
<keyword id="KW-1185">Reference proteome</keyword>
<keyword id="KW-0677">Repeat</keyword>
<keyword id="KW-0946">Virion</keyword>
<name>COLL3_MIMIV</name>
<protein>
    <recommendedName>
        <fullName>Collagen-like protein 3</fullName>
    </recommendedName>
</protein>
<proteinExistence type="predicted"/>
<gene>
    <name type="ordered locus">MIMI_R239</name>
</gene>